<name>RL11_GLUOX</name>
<gene>
    <name evidence="1" type="primary">rplK</name>
    <name type="ordered locus">GOX0390</name>
</gene>
<keyword id="KW-0488">Methylation</keyword>
<keyword id="KW-1185">Reference proteome</keyword>
<keyword id="KW-0687">Ribonucleoprotein</keyword>
<keyword id="KW-0689">Ribosomal protein</keyword>
<keyword id="KW-0694">RNA-binding</keyword>
<keyword id="KW-0699">rRNA-binding</keyword>
<feature type="chain" id="PRO_0000258158" description="Large ribosomal subunit protein uL11">
    <location>
        <begin position="1"/>
        <end position="144"/>
    </location>
</feature>
<sequence length="144" mass="15258">MAKKVVGYIKLQIPAGKANPSPPVGPALGQRGLNIMQFCKEFNAKTQQLEPGMPIPVVITAYADRTFSFITKTPPNTYFLLKAAKISKGSQTVGKSAAVGSVTTAQLREIAETKFKDMNANDIDGAVRMLAGSAKSMGLNVVEG</sequence>
<proteinExistence type="inferred from homology"/>
<comment type="function">
    <text evidence="1">Forms part of the ribosomal stalk which helps the ribosome interact with GTP-bound translation factors.</text>
</comment>
<comment type="subunit">
    <text evidence="1">Part of the ribosomal stalk of the 50S ribosomal subunit. Interacts with L10 and the large rRNA to form the base of the stalk. L10 forms an elongated spine to which L12 dimers bind in a sequential fashion forming a multimeric L10(L12)X complex.</text>
</comment>
<comment type="PTM">
    <text evidence="1">One or more lysine residues are methylated.</text>
</comment>
<comment type="similarity">
    <text evidence="1">Belongs to the universal ribosomal protein uL11 family.</text>
</comment>
<protein>
    <recommendedName>
        <fullName evidence="1">Large ribosomal subunit protein uL11</fullName>
    </recommendedName>
    <alternativeName>
        <fullName evidence="2">50S ribosomal protein L11</fullName>
    </alternativeName>
</protein>
<dbReference type="EMBL" id="CP000009">
    <property type="protein sequence ID" value="AAW60173.1"/>
    <property type="molecule type" value="Genomic_DNA"/>
</dbReference>
<dbReference type="RefSeq" id="WP_008852418.1">
    <property type="nucleotide sequence ID" value="NZ_LT900338.1"/>
</dbReference>
<dbReference type="SMR" id="Q5FTX3"/>
<dbReference type="STRING" id="290633.GOX0390"/>
<dbReference type="GeneID" id="81475016"/>
<dbReference type="KEGG" id="gox:GOX0390"/>
<dbReference type="eggNOG" id="COG0080">
    <property type="taxonomic scope" value="Bacteria"/>
</dbReference>
<dbReference type="HOGENOM" id="CLU_074237_2_0_5"/>
<dbReference type="Proteomes" id="UP000006375">
    <property type="component" value="Chromosome"/>
</dbReference>
<dbReference type="GO" id="GO:0022625">
    <property type="term" value="C:cytosolic large ribosomal subunit"/>
    <property type="evidence" value="ECO:0007669"/>
    <property type="project" value="TreeGrafter"/>
</dbReference>
<dbReference type="GO" id="GO:0070180">
    <property type="term" value="F:large ribosomal subunit rRNA binding"/>
    <property type="evidence" value="ECO:0007669"/>
    <property type="project" value="UniProtKB-UniRule"/>
</dbReference>
<dbReference type="GO" id="GO:0003735">
    <property type="term" value="F:structural constituent of ribosome"/>
    <property type="evidence" value="ECO:0007669"/>
    <property type="project" value="InterPro"/>
</dbReference>
<dbReference type="GO" id="GO:0006412">
    <property type="term" value="P:translation"/>
    <property type="evidence" value="ECO:0007669"/>
    <property type="project" value="UniProtKB-UniRule"/>
</dbReference>
<dbReference type="CDD" id="cd00349">
    <property type="entry name" value="Ribosomal_L11"/>
    <property type="match status" value="1"/>
</dbReference>
<dbReference type="FunFam" id="3.30.1550.10:FF:000001">
    <property type="entry name" value="50S ribosomal protein L11"/>
    <property type="match status" value="1"/>
</dbReference>
<dbReference type="Gene3D" id="1.10.10.250">
    <property type="entry name" value="Ribosomal protein L11, C-terminal domain"/>
    <property type="match status" value="1"/>
</dbReference>
<dbReference type="Gene3D" id="3.30.1550.10">
    <property type="entry name" value="Ribosomal protein L11/L12, N-terminal domain"/>
    <property type="match status" value="1"/>
</dbReference>
<dbReference type="HAMAP" id="MF_00736">
    <property type="entry name" value="Ribosomal_uL11"/>
    <property type="match status" value="1"/>
</dbReference>
<dbReference type="InterPro" id="IPR000911">
    <property type="entry name" value="Ribosomal_uL11"/>
</dbReference>
<dbReference type="InterPro" id="IPR006519">
    <property type="entry name" value="Ribosomal_uL11_bac-typ"/>
</dbReference>
<dbReference type="InterPro" id="IPR020783">
    <property type="entry name" value="Ribosomal_uL11_C"/>
</dbReference>
<dbReference type="InterPro" id="IPR036769">
    <property type="entry name" value="Ribosomal_uL11_C_sf"/>
</dbReference>
<dbReference type="InterPro" id="IPR020785">
    <property type="entry name" value="Ribosomal_uL11_CS"/>
</dbReference>
<dbReference type="InterPro" id="IPR020784">
    <property type="entry name" value="Ribosomal_uL11_N"/>
</dbReference>
<dbReference type="InterPro" id="IPR036796">
    <property type="entry name" value="Ribosomal_uL11_N_sf"/>
</dbReference>
<dbReference type="NCBIfam" id="TIGR01632">
    <property type="entry name" value="L11_bact"/>
    <property type="match status" value="1"/>
</dbReference>
<dbReference type="PANTHER" id="PTHR11661">
    <property type="entry name" value="60S RIBOSOMAL PROTEIN L12"/>
    <property type="match status" value="1"/>
</dbReference>
<dbReference type="PANTHER" id="PTHR11661:SF1">
    <property type="entry name" value="LARGE RIBOSOMAL SUBUNIT PROTEIN UL11M"/>
    <property type="match status" value="1"/>
</dbReference>
<dbReference type="Pfam" id="PF00298">
    <property type="entry name" value="Ribosomal_L11"/>
    <property type="match status" value="1"/>
</dbReference>
<dbReference type="Pfam" id="PF03946">
    <property type="entry name" value="Ribosomal_L11_N"/>
    <property type="match status" value="1"/>
</dbReference>
<dbReference type="SMART" id="SM00649">
    <property type="entry name" value="RL11"/>
    <property type="match status" value="1"/>
</dbReference>
<dbReference type="SUPFAM" id="SSF54747">
    <property type="entry name" value="Ribosomal L11/L12e N-terminal domain"/>
    <property type="match status" value="1"/>
</dbReference>
<dbReference type="SUPFAM" id="SSF46906">
    <property type="entry name" value="Ribosomal protein L11, C-terminal domain"/>
    <property type="match status" value="1"/>
</dbReference>
<dbReference type="PROSITE" id="PS00359">
    <property type="entry name" value="RIBOSOMAL_L11"/>
    <property type="match status" value="1"/>
</dbReference>
<organism>
    <name type="scientific">Gluconobacter oxydans (strain 621H)</name>
    <name type="common">Gluconobacter suboxydans</name>
    <dbReference type="NCBI Taxonomy" id="290633"/>
    <lineage>
        <taxon>Bacteria</taxon>
        <taxon>Pseudomonadati</taxon>
        <taxon>Pseudomonadota</taxon>
        <taxon>Alphaproteobacteria</taxon>
        <taxon>Acetobacterales</taxon>
        <taxon>Acetobacteraceae</taxon>
        <taxon>Gluconobacter</taxon>
    </lineage>
</organism>
<accession>Q5FTX3</accession>
<evidence type="ECO:0000255" key="1">
    <source>
        <dbReference type="HAMAP-Rule" id="MF_00736"/>
    </source>
</evidence>
<evidence type="ECO:0000305" key="2"/>
<reference key="1">
    <citation type="journal article" date="2005" name="Nat. Biotechnol.">
        <title>Complete genome sequence of the acetic acid bacterium Gluconobacter oxydans.</title>
        <authorList>
            <person name="Prust C."/>
            <person name="Hoffmeister M."/>
            <person name="Liesegang H."/>
            <person name="Wiezer A."/>
            <person name="Fricke W.F."/>
            <person name="Ehrenreich A."/>
            <person name="Gottschalk G."/>
            <person name="Deppenmeier U."/>
        </authorList>
    </citation>
    <scope>NUCLEOTIDE SEQUENCE [LARGE SCALE GENOMIC DNA]</scope>
    <source>
        <strain>621H</strain>
    </source>
</reference>